<gene>
    <name evidence="1" type="primary">rpoZ</name>
    <name type="ordered locus">BBta_4688</name>
</gene>
<evidence type="ECO:0000255" key="1">
    <source>
        <dbReference type="HAMAP-Rule" id="MF_00366"/>
    </source>
</evidence>
<evidence type="ECO:0000256" key="2">
    <source>
        <dbReference type="SAM" id="MobiDB-lite"/>
    </source>
</evidence>
<protein>
    <recommendedName>
        <fullName evidence="1">DNA-directed RNA polymerase subunit omega</fullName>
        <shortName evidence="1">RNAP omega subunit</shortName>
        <ecNumber evidence="1">2.7.7.6</ecNumber>
    </recommendedName>
    <alternativeName>
        <fullName evidence="1">RNA polymerase omega subunit</fullName>
    </alternativeName>
    <alternativeName>
        <fullName evidence="1">Transcriptase subunit omega</fullName>
    </alternativeName>
</protein>
<organism>
    <name type="scientific">Bradyrhizobium sp. (strain BTAi1 / ATCC BAA-1182)</name>
    <dbReference type="NCBI Taxonomy" id="288000"/>
    <lineage>
        <taxon>Bacteria</taxon>
        <taxon>Pseudomonadati</taxon>
        <taxon>Pseudomonadota</taxon>
        <taxon>Alphaproteobacteria</taxon>
        <taxon>Hyphomicrobiales</taxon>
        <taxon>Nitrobacteraceae</taxon>
        <taxon>Bradyrhizobium</taxon>
    </lineage>
</organism>
<dbReference type="EC" id="2.7.7.6" evidence="1"/>
<dbReference type="EMBL" id="CP000494">
    <property type="protein sequence ID" value="ABQ36716.1"/>
    <property type="molecule type" value="Genomic_DNA"/>
</dbReference>
<dbReference type="RefSeq" id="WP_006612728.1">
    <property type="nucleotide sequence ID" value="NC_009485.1"/>
</dbReference>
<dbReference type="SMR" id="A5EKM2"/>
<dbReference type="STRING" id="288000.BBta_4688"/>
<dbReference type="KEGG" id="bbt:BBta_4688"/>
<dbReference type="eggNOG" id="COG1758">
    <property type="taxonomic scope" value="Bacteria"/>
</dbReference>
<dbReference type="HOGENOM" id="CLU_125406_2_0_5"/>
<dbReference type="OrthoDB" id="9796300at2"/>
<dbReference type="Proteomes" id="UP000000246">
    <property type="component" value="Chromosome"/>
</dbReference>
<dbReference type="GO" id="GO:0000428">
    <property type="term" value="C:DNA-directed RNA polymerase complex"/>
    <property type="evidence" value="ECO:0007669"/>
    <property type="project" value="UniProtKB-KW"/>
</dbReference>
<dbReference type="GO" id="GO:0003677">
    <property type="term" value="F:DNA binding"/>
    <property type="evidence" value="ECO:0007669"/>
    <property type="project" value="UniProtKB-UniRule"/>
</dbReference>
<dbReference type="GO" id="GO:0003899">
    <property type="term" value="F:DNA-directed RNA polymerase activity"/>
    <property type="evidence" value="ECO:0007669"/>
    <property type="project" value="UniProtKB-UniRule"/>
</dbReference>
<dbReference type="GO" id="GO:0006351">
    <property type="term" value="P:DNA-templated transcription"/>
    <property type="evidence" value="ECO:0007669"/>
    <property type="project" value="UniProtKB-UniRule"/>
</dbReference>
<dbReference type="Gene3D" id="3.90.940.10">
    <property type="match status" value="1"/>
</dbReference>
<dbReference type="HAMAP" id="MF_00366">
    <property type="entry name" value="RNApol_bact_RpoZ"/>
    <property type="match status" value="1"/>
</dbReference>
<dbReference type="InterPro" id="IPR003716">
    <property type="entry name" value="DNA-dir_RNA_pol_omega"/>
</dbReference>
<dbReference type="InterPro" id="IPR006110">
    <property type="entry name" value="Pol_omega/Rpo6/RPB6"/>
</dbReference>
<dbReference type="InterPro" id="IPR036161">
    <property type="entry name" value="RPB6/omega-like_sf"/>
</dbReference>
<dbReference type="NCBIfam" id="TIGR00690">
    <property type="entry name" value="rpoZ"/>
    <property type="match status" value="1"/>
</dbReference>
<dbReference type="PANTHER" id="PTHR34476">
    <property type="entry name" value="DNA-DIRECTED RNA POLYMERASE SUBUNIT OMEGA"/>
    <property type="match status" value="1"/>
</dbReference>
<dbReference type="PANTHER" id="PTHR34476:SF1">
    <property type="entry name" value="DNA-DIRECTED RNA POLYMERASE SUBUNIT OMEGA"/>
    <property type="match status" value="1"/>
</dbReference>
<dbReference type="Pfam" id="PF01192">
    <property type="entry name" value="RNA_pol_Rpb6"/>
    <property type="match status" value="1"/>
</dbReference>
<dbReference type="SMART" id="SM01409">
    <property type="entry name" value="RNA_pol_Rpb6"/>
    <property type="match status" value="1"/>
</dbReference>
<dbReference type="SUPFAM" id="SSF63562">
    <property type="entry name" value="RPB6/omega subunit-like"/>
    <property type="match status" value="1"/>
</dbReference>
<feature type="chain" id="PRO_1000005893" description="DNA-directed RNA polymerase subunit omega">
    <location>
        <begin position="1"/>
        <end position="130"/>
    </location>
</feature>
<feature type="region of interest" description="Disordered" evidence="2">
    <location>
        <begin position="110"/>
        <end position="130"/>
    </location>
</feature>
<comment type="function">
    <text evidence="1">Promotes RNA polymerase assembly. Latches the N- and C-terminal regions of the beta' subunit thereby facilitating its interaction with the beta and alpha subunits.</text>
</comment>
<comment type="catalytic activity">
    <reaction evidence="1">
        <text>RNA(n) + a ribonucleoside 5'-triphosphate = RNA(n+1) + diphosphate</text>
        <dbReference type="Rhea" id="RHEA:21248"/>
        <dbReference type="Rhea" id="RHEA-COMP:14527"/>
        <dbReference type="Rhea" id="RHEA-COMP:17342"/>
        <dbReference type="ChEBI" id="CHEBI:33019"/>
        <dbReference type="ChEBI" id="CHEBI:61557"/>
        <dbReference type="ChEBI" id="CHEBI:140395"/>
        <dbReference type="EC" id="2.7.7.6"/>
    </reaction>
</comment>
<comment type="subunit">
    <text evidence="1">The RNAP catalytic core consists of 2 alpha, 1 beta, 1 beta' and 1 omega subunit. When a sigma factor is associated with the core the holoenzyme is formed, which can initiate transcription.</text>
</comment>
<comment type="similarity">
    <text evidence="1">Belongs to the RNA polymerase subunit omega family.</text>
</comment>
<accession>A5EKM2</accession>
<keyword id="KW-0240">DNA-directed RNA polymerase</keyword>
<keyword id="KW-0548">Nucleotidyltransferase</keyword>
<keyword id="KW-1185">Reference proteome</keyword>
<keyword id="KW-0804">Transcription</keyword>
<keyword id="KW-0808">Transferase</keyword>
<proteinExistence type="inferred from homology"/>
<name>RPOZ_BRASB</name>
<sequence>MARVTVEDCIDKVDNRFDLVLLAAHRARMISSGSQLTIDRDNDKNPVVALREIADSTISPEDLKEELVHSLQKFVEVDEPEPDTVPLIGSAGASVDADDTEVAVERMTEEELLKGLEGLAPPEEQPEEDE</sequence>
<reference key="1">
    <citation type="journal article" date="2007" name="Science">
        <title>Legumes symbioses: absence of nod genes in photosynthetic bradyrhizobia.</title>
        <authorList>
            <person name="Giraud E."/>
            <person name="Moulin L."/>
            <person name="Vallenet D."/>
            <person name="Barbe V."/>
            <person name="Cytryn E."/>
            <person name="Avarre J.-C."/>
            <person name="Jaubert M."/>
            <person name="Simon D."/>
            <person name="Cartieaux F."/>
            <person name="Prin Y."/>
            <person name="Bena G."/>
            <person name="Hannibal L."/>
            <person name="Fardoux J."/>
            <person name="Kojadinovic M."/>
            <person name="Vuillet L."/>
            <person name="Lajus A."/>
            <person name="Cruveiller S."/>
            <person name="Rouy Z."/>
            <person name="Mangenot S."/>
            <person name="Segurens B."/>
            <person name="Dossat C."/>
            <person name="Franck W.L."/>
            <person name="Chang W.-S."/>
            <person name="Saunders E."/>
            <person name="Bruce D."/>
            <person name="Richardson P."/>
            <person name="Normand P."/>
            <person name="Dreyfus B."/>
            <person name="Pignol D."/>
            <person name="Stacey G."/>
            <person name="Emerich D."/>
            <person name="Vermeglio A."/>
            <person name="Medigue C."/>
            <person name="Sadowsky M."/>
        </authorList>
    </citation>
    <scope>NUCLEOTIDE SEQUENCE [LARGE SCALE GENOMIC DNA]</scope>
    <source>
        <strain>BTAi1 / ATCC BAA-1182</strain>
    </source>
</reference>